<sequence>MSASRRESEPKEAETSPEAGGAASDRRRSKTSRACDQCREKKTRCDFSDERPICSACQRMGKTCTFERVPMKRGPTKGYTRNSEPPEGFDTSRRGSRKRSSSDVFKGDAGRPRADPVSLPPLAQYLPQSGSQPRLQPLLAPGAQPQQQFWKVPYYEYQHQRRGSIDSLGSDVSNRNGSEQLAYLPSNASSGSQFYPASQAQYASQLPSDVEGANPEDCRGSLSLPAIQKFQQPPSGYYLQYPYSQFSMLPQQQQQQQQQNAQQSYFTSQYVPPAAPPGAEHFKEFDEGFHSRKGSDVSVAVSPSSPVQVTRTQQAGLNSESRDTNTATAVSPKPLPKPSKPQMQTERSSSKSDGNHNGPRKQKRKNSNRNKPGSQSSIESIASSSHASIIYGKIPDKQLIDIYFEFIHPNFPVIPINKETLTDDLLLVNTQPISPVHELNTYILHWFRNSLELLVRVALKKPSGSGQAYSDGAVDILDSQATFINALNECFQRIVDIHPGLRENEKLLSLKTKFIYLATFSILNYILAFVGYDNSFVLGMSVTIYNECKLYRYLMYDELPSNDTEASENEDEAGAGDAHASGTPERGKSAKHDLGHQVLFKRLYVLLVVFDSLQSCAFGVPKLISVPLAELTEETFKFSTGKWCVERDPQRFETIRQSLVLGQVLSWLSISRKSVRRNSLQAAPQDASWKDEKSDSVSSSLFAKFLVQKHEMMEDFLLLAPLENSSHLLTFDLLSKSSTAICGLISSMHRLLALLMKINPTNSVDPNNRPPLRQGDFVHTDTEIQSESSNPPAATAAPDSCDADKFDVYRKLLGLNGGQERHVAQGTISPFVISIVVEIRNVLELVKHLPTSIIGVVVNLLPNGEGENYQKRSHRLVMSLSNAMNELVQITSLISLLKPFKMFDHTLRSNRPSAKVSTKLLRQKFAPESVKTPSSQPPSSSPGPNSDGSNNTSLSQNTVMHAILDAAWDLMDGEELGWL</sequence>
<protein>
    <recommendedName>
        <fullName>Glucose transport transcription regulator RGT1</fullName>
    </recommendedName>
    <alternativeName>
        <fullName>Restores glucose transport protein 1</fullName>
    </alternativeName>
</protein>
<proteinExistence type="inferred from homology"/>
<feature type="chain" id="PRO_0000408015" description="Glucose transport transcription regulator RGT1">
    <location>
        <begin position="1"/>
        <end position="979"/>
    </location>
</feature>
<feature type="DNA-binding region" description="Zn(2)-C6 fungal-type" evidence="2">
    <location>
        <begin position="35"/>
        <end position="64"/>
    </location>
</feature>
<feature type="region of interest" description="Disordered" evidence="3">
    <location>
        <begin position="1"/>
        <end position="47"/>
    </location>
</feature>
<feature type="region of interest" description="Disordered" evidence="3">
    <location>
        <begin position="65"/>
        <end position="142"/>
    </location>
</feature>
<feature type="region of interest" description="Disordered" evidence="3">
    <location>
        <begin position="165"/>
        <end position="219"/>
    </location>
</feature>
<feature type="region of interest" description="Disordered" evidence="3">
    <location>
        <begin position="249"/>
        <end position="380"/>
    </location>
</feature>
<feature type="region of interest" description="Disordered" evidence="3">
    <location>
        <begin position="563"/>
        <end position="590"/>
    </location>
</feature>
<feature type="region of interest" description="Disordered" evidence="3">
    <location>
        <begin position="926"/>
        <end position="954"/>
    </location>
</feature>
<feature type="compositionally biased region" description="Basic and acidic residues" evidence="3">
    <location>
        <begin position="1"/>
        <end position="14"/>
    </location>
</feature>
<feature type="compositionally biased region" description="Basic and acidic residues" evidence="3">
    <location>
        <begin position="36"/>
        <end position="47"/>
    </location>
</feature>
<feature type="compositionally biased region" description="Basic and acidic residues" evidence="3">
    <location>
        <begin position="105"/>
        <end position="114"/>
    </location>
</feature>
<feature type="compositionally biased region" description="Low complexity" evidence="3">
    <location>
        <begin position="132"/>
        <end position="142"/>
    </location>
</feature>
<feature type="compositionally biased region" description="Polar residues" evidence="3">
    <location>
        <begin position="170"/>
        <end position="179"/>
    </location>
</feature>
<feature type="compositionally biased region" description="Polar residues" evidence="3">
    <location>
        <begin position="186"/>
        <end position="207"/>
    </location>
</feature>
<feature type="compositionally biased region" description="Low complexity" evidence="3">
    <location>
        <begin position="251"/>
        <end position="263"/>
    </location>
</feature>
<feature type="compositionally biased region" description="Basic and acidic residues" evidence="3">
    <location>
        <begin position="280"/>
        <end position="295"/>
    </location>
</feature>
<feature type="compositionally biased region" description="Low complexity" evidence="3">
    <location>
        <begin position="296"/>
        <end position="309"/>
    </location>
</feature>
<feature type="compositionally biased region" description="Polar residues" evidence="3">
    <location>
        <begin position="310"/>
        <end position="329"/>
    </location>
</feature>
<feature type="compositionally biased region" description="Basic residues" evidence="3">
    <location>
        <begin position="358"/>
        <end position="368"/>
    </location>
</feature>
<feature type="compositionally biased region" description="Low complexity" evidence="3">
    <location>
        <begin position="369"/>
        <end position="380"/>
    </location>
</feature>
<feature type="compositionally biased region" description="Acidic residues" evidence="3">
    <location>
        <begin position="565"/>
        <end position="574"/>
    </location>
</feature>
<feature type="compositionally biased region" description="Low complexity" evidence="3">
    <location>
        <begin position="942"/>
        <end position="953"/>
    </location>
</feature>
<dbReference type="EMBL" id="CU928168">
    <property type="protein sequence ID" value="CAR22599.1"/>
    <property type="molecule type" value="Genomic_DNA"/>
</dbReference>
<dbReference type="RefSeq" id="XP_002553037.1">
    <property type="nucleotide sequence ID" value="XM_002552991.1"/>
</dbReference>
<dbReference type="FunCoup" id="C5DGQ7">
    <property type="interactions" value="382"/>
</dbReference>
<dbReference type="STRING" id="559295.C5DGQ7"/>
<dbReference type="GeneID" id="8295268"/>
<dbReference type="KEGG" id="lth:KLTH0D07260g"/>
<dbReference type="eggNOG" id="ENOG502QRVJ">
    <property type="taxonomic scope" value="Eukaryota"/>
</dbReference>
<dbReference type="HOGENOM" id="CLU_006525_0_0_1"/>
<dbReference type="InParanoid" id="C5DGQ7"/>
<dbReference type="OMA" id="WFRNSLE"/>
<dbReference type="OrthoDB" id="5426978at2759"/>
<dbReference type="Proteomes" id="UP000002036">
    <property type="component" value="Chromosome D"/>
</dbReference>
<dbReference type="GO" id="GO:0005737">
    <property type="term" value="C:cytoplasm"/>
    <property type="evidence" value="ECO:0007669"/>
    <property type="project" value="UniProtKB-SubCell"/>
</dbReference>
<dbReference type="GO" id="GO:0005634">
    <property type="term" value="C:nucleus"/>
    <property type="evidence" value="ECO:0007669"/>
    <property type="project" value="UniProtKB-SubCell"/>
</dbReference>
<dbReference type="GO" id="GO:0003677">
    <property type="term" value="F:DNA binding"/>
    <property type="evidence" value="ECO:0007669"/>
    <property type="project" value="UniProtKB-KW"/>
</dbReference>
<dbReference type="GO" id="GO:0000981">
    <property type="term" value="F:DNA-binding transcription factor activity, RNA polymerase II-specific"/>
    <property type="evidence" value="ECO:0007669"/>
    <property type="project" value="InterPro"/>
</dbReference>
<dbReference type="GO" id="GO:0008270">
    <property type="term" value="F:zinc ion binding"/>
    <property type="evidence" value="ECO:0007669"/>
    <property type="project" value="InterPro"/>
</dbReference>
<dbReference type="CDD" id="cd00067">
    <property type="entry name" value="GAL4"/>
    <property type="match status" value="1"/>
</dbReference>
<dbReference type="Gene3D" id="4.10.240.10">
    <property type="entry name" value="Zn(2)-C6 fungal-type DNA-binding domain"/>
    <property type="match status" value="1"/>
</dbReference>
<dbReference type="InterPro" id="IPR050797">
    <property type="entry name" value="Carb_Metab_Trans_Reg"/>
</dbReference>
<dbReference type="InterPro" id="IPR036864">
    <property type="entry name" value="Zn2-C6_fun-type_DNA-bd_sf"/>
</dbReference>
<dbReference type="InterPro" id="IPR001138">
    <property type="entry name" value="Zn2Cys6_DnaBD"/>
</dbReference>
<dbReference type="PANTHER" id="PTHR31668:SF26">
    <property type="entry name" value="GLUCOSE TRANSPORT TRANSCRIPTION REGULATOR RGT1-RELATED"/>
    <property type="match status" value="1"/>
</dbReference>
<dbReference type="PANTHER" id="PTHR31668">
    <property type="entry name" value="GLUCOSE TRANSPORT TRANSCRIPTION REGULATOR RGT1-RELATED-RELATED"/>
    <property type="match status" value="1"/>
</dbReference>
<dbReference type="Pfam" id="PF00172">
    <property type="entry name" value="Zn_clus"/>
    <property type="match status" value="1"/>
</dbReference>
<dbReference type="SMART" id="SM00066">
    <property type="entry name" value="GAL4"/>
    <property type="match status" value="1"/>
</dbReference>
<dbReference type="SUPFAM" id="SSF57701">
    <property type="entry name" value="Zn2/Cys6 DNA-binding domain"/>
    <property type="match status" value="1"/>
</dbReference>
<dbReference type="PROSITE" id="PS00463">
    <property type="entry name" value="ZN2_CY6_FUNGAL_1"/>
    <property type="match status" value="1"/>
</dbReference>
<dbReference type="PROSITE" id="PS50048">
    <property type="entry name" value="ZN2_CY6_FUNGAL_2"/>
    <property type="match status" value="1"/>
</dbReference>
<name>RGT1_LACTC</name>
<keyword id="KW-0010">Activator</keyword>
<keyword id="KW-0963">Cytoplasm</keyword>
<keyword id="KW-0238">DNA-binding</keyword>
<keyword id="KW-0479">Metal-binding</keyword>
<keyword id="KW-0539">Nucleus</keyword>
<keyword id="KW-1185">Reference proteome</keyword>
<keyword id="KW-0678">Repressor</keyword>
<keyword id="KW-0804">Transcription</keyword>
<keyword id="KW-0805">Transcription regulation</keyword>
<keyword id="KW-0862">Zinc</keyword>
<comment type="function">
    <text evidence="1">Glucose-responsive transcription factor that regulates expression of several glucose transporter (HXT) genes in response to glucose. In the absence of glucose, it functions as a transcriptional repressor, whereas high concentrations of glucose cause it to function as a transcriptional activator. In cells growing on low levels of glucose, has a neutral role, neither repressing nor activating transcription (By similarity).</text>
</comment>
<comment type="subcellular location">
    <subcellularLocation>
        <location evidence="2">Nucleus</location>
    </subcellularLocation>
    <subcellularLocation>
        <location evidence="1">Cytoplasm</location>
    </subcellularLocation>
</comment>
<comment type="similarity">
    <text evidence="4">Belongs to the EDS1/RGT1 family.</text>
</comment>
<accession>C5DGQ7</accession>
<evidence type="ECO:0000250" key="1"/>
<evidence type="ECO:0000255" key="2">
    <source>
        <dbReference type="PROSITE-ProRule" id="PRU00227"/>
    </source>
</evidence>
<evidence type="ECO:0000256" key="3">
    <source>
        <dbReference type="SAM" id="MobiDB-lite"/>
    </source>
</evidence>
<evidence type="ECO:0000305" key="4"/>
<gene>
    <name type="primary">RGT1</name>
    <name type="ordered locus">KLTH0D07260g</name>
</gene>
<organism>
    <name type="scientific">Lachancea thermotolerans (strain ATCC 56472 / CBS 6340 / NRRL Y-8284)</name>
    <name type="common">Yeast</name>
    <name type="synonym">Kluyveromyces thermotolerans</name>
    <dbReference type="NCBI Taxonomy" id="559295"/>
    <lineage>
        <taxon>Eukaryota</taxon>
        <taxon>Fungi</taxon>
        <taxon>Dikarya</taxon>
        <taxon>Ascomycota</taxon>
        <taxon>Saccharomycotina</taxon>
        <taxon>Saccharomycetes</taxon>
        <taxon>Saccharomycetales</taxon>
        <taxon>Saccharomycetaceae</taxon>
        <taxon>Lachancea</taxon>
    </lineage>
</organism>
<reference key="1">
    <citation type="journal article" date="2009" name="Genome Res.">
        <title>Comparative genomics of protoploid Saccharomycetaceae.</title>
        <authorList>
            <consortium name="The Genolevures Consortium"/>
            <person name="Souciet J.-L."/>
            <person name="Dujon B."/>
            <person name="Gaillardin C."/>
            <person name="Johnston M."/>
            <person name="Baret P.V."/>
            <person name="Cliften P."/>
            <person name="Sherman D.J."/>
            <person name="Weissenbach J."/>
            <person name="Westhof E."/>
            <person name="Wincker P."/>
            <person name="Jubin C."/>
            <person name="Poulain J."/>
            <person name="Barbe V."/>
            <person name="Segurens B."/>
            <person name="Artiguenave F."/>
            <person name="Anthouard V."/>
            <person name="Vacherie B."/>
            <person name="Val M.-E."/>
            <person name="Fulton R.S."/>
            <person name="Minx P."/>
            <person name="Wilson R."/>
            <person name="Durrens P."/>
            <person name="Jean G."/>
            <person name="Marck C."/>
            <person name="Martin T."/>
            <person name="Nikolski M."/>
            <person name="Rolland T."/>
            <person name="Seret M.-L."/>
            <person name="Casaregola S."/>
            <person name="Despons L."/>
            <person name="Fairhead C."/>
            <person name="Fischer G."/>
            <person name="Lafontaine I."/>
            <person name="Leh V."/>
            <person name="Lemaire M."/>
            <person name="de Montigny J."/>
            <person name="Neuveglise C."/>
            <person name="Thierry A."/>
            <person name="Blanc-Lenfle I."/>
            <person name="Bleykasten C."/>
            <person name="Diffels J."/>
            <person name="Fritsch E."/>
            <person name="Frangeul L."/>
            <person name="Goeffon A."/>
            <person name="Jauniaux N."/>
            <person name="Kachouri-Lafond R."/>
            <person name="Payen C."/>
            <person name="Potier S."/>
            <person name="Pribylova L."/>
            <person name="Ozanne C."/>
            <person name="Richard G.-F."/>
            <person name="Sacerdot C."/>
            <person name="Straub M.-L."/>
            <person name="Talla E."/>
        </authorList>
    </citation>
    <scope>NUCLEOTIDE SEQUENCE [LARGE SCALE GENOMIC DNA]</scope>
    <source>
        <strain>ATCC 56472 / CBS 6340 / NRRL Y-8284</strain>
    </source>
</reference>